<reference key="1">
    <citation type="submission" date="2007-11" db="EMBL/GenBank/DDBJ databases">
        <title>Complete sequence of Petroga mobilis SJ95.</title>
        <authorList>
            <consortium name="US DOE Joint Genome Institute"/>
            <person name="Copeland A."/>
            <person name="Lucas S."/>
            <person name="Lapidus A."/>
            <person name="Barry K."/>
            <person name="Glavina del Rio T."/>
            <person name="Dalin E."/>
            <person name="Tice H."/>
            <person name="Pitluck S."/>
            <person name="Meincke L."/>
            <person name="Brettin T."/>
            <person name="Bruce D."/>
            <person name="Detter J.C."/>
            <person name="Han C."/>
            <person name="Kuske C.R."/>
            <person name="Schmutz J."/>
            <person name="Larimer F."/>
            <person name="Land M."/>
            <person name="Hauser L."/>
            <person name="Kyrpides N."/>
            <person name="Mikhailova N."/>
            <person name="Noll K."/>
            <person name="Richardson P."/>
        </authorList>
    </citation>
    <scope>NUCLEOTIDE SEQUENCE [LARGE SCALE GENOMIC DNA]</scope>
    <source>
        <strain>DSM 10674 / SJ95</strain>
    </source>
</reference>
<comment type="function">
    <text evidence="1">Protease subunit of a proteasome-like degradation complex believed to be a general protein degrading machinery.</text>
</comment>
<comment type="catalytic activity">
    <reaction evidence="1">
        <text>ATP-dependent cleavage of peptide bonds with broad specificity.</text>
        <dbReference type="EC" id="3.4.25.2"/>
    </reaction>
</comment>
<comment type="activity regulation">
    <text evidence="1">Allosterically activated by HslU binding.</text>
</comment>
<comment type="subunit">
    <text evidence="1">A double ring-shaped homohexamer of HslV is capped on each side by a ring-shaped HslU homohexamer. The assembly of the HslU/HslV complex is dependent on binding of ATP.</text>
</comment>
<comment type="subcellular location">
    <subcellularLocation>
        <location evidence="1">Cytoplasm</location>
    </subcellularLocation>
</comment>
<comment type="similarity">
    <text evidence="1">Belongs to the peptidase T1B family. HslV subfamily.</text>
</comment>
<keyword id="KW-0021">Allosteric enzyme</keyword>
<keyword id="KW-0963">Cytoplasm</keyword>
<keyword id="KW-0378">Hydrolase</keyword>
<keyword id="KW-0479">Metal-binding</keyword>
<keyword id="KW-0645">Protease</keyword>
<keyword id="KW-0915">Sodium</keyword>
<keyword id="KW-0888">Threonine protease</keyword>
<gene>
    <name evidence="1" type="primary">hslV</name>
    <name type="ordered locus">Pmob_1642</name>
</gene>
<sequence length="177" mass="19201">MDFHGTTILGVKRNGKTVICGDGQVTMGETIFKGNAKKVRRLGEGKVISGFAGSVADALALYERFEGKYKSSHGNLMKAAVELTKEWRMDKALRRLEALLLVADKENIFLISGNGEVMEPQEDAIAIGSGGPYAYAAAMALLRNTDLDAEEIAQKAIKIAGEICIYTNDNITMEIIE</sequence>
<evidence type="ECO:0000255" key="1">
    <source>
        <dbReference type="HAMAP-Rule" id="MF_00248"/>
    </source>
</evidence>
<name>HSLV_PETMO</name>
<accession>A9BI45</accession>
<proteinExistence type="inferred from homology"/>
<dbReference type="EC" id="3.4.25.2" evidence="1"/>
<dbReference type="EMBL" id="CP000879">
    <property type="protein sequence ID" value="ABX32336.1"/>
    <property type="molecule type" value="Genomic_DNA"/>
</dbReference>
<dbReference type="RefSeq" id="WP_012209433.1">
    <property type="nucleotide sequence ID" value="NC_010003.1"/>
</dbReference>
<dbReference type="SMR" id="A9BI45"/>
<dbReference type="STRING" id="403833.Pmob_1642"/>
<dbReference type="MEROPS" id="T01.006"/>
<dbReference type="KEGG" id="pmo:Pmob_1642"/>
<dbReference type="eggNOG" id="COG5405">
    <property type="taxonomic scope" value="Bacteria"/>
</dbReference>
<dbReference type="HOGENOM" id="CLU_093872_1_0_0"/>
<dbReference type="OrthoDB" id="9804884at2"/>
<dbReference type="Proteomes" id="UP000000789">
    <property type="component" value="Chromosome"/>
</dbReference>
<dbReference type="GO" id="GO:0009376">
    <property type="term" value="C:HslUV protease complex"/>
    <property type="evidence" value="ECO:0007669"/>
    <property type="project" value="UniProtKB-UniRule"/>
</dbReference>
<dbReference type="GO" id="GO:0005839">
    <property type="term" value="C:proteasome core complex"/>
    <property type="evidence" value="ECO:0007669"/>
    <property type="project" value="InterPro"/>
</dbReference>
<dbReference type="GO" id="GO:0046872">
    <property type="term" value="F:metal ion binding"/>
    <property type="evidence" value="ECO:0007669"/>
    <property type="project" value="UniProtKB-KW"/>
</dbReference>
<dbReference type="GO" id="GO:0004298">
    <property type="term" value="F:threonine-type endopeptidase activity"/>
    <property type="evidence" value="ECO:0007669"/>
    <property type="project" value="UniProtKB-KW"/>
</dbReference>
<dbReference type="GO" id="GO:0051603">
    <property type="term" value="P:proteolysis involved in protein catabolic process"/>
    <property type="evidence" value="ECO:0007669"/>
    <property type="project" value="InterPro"/>
</dbReference>
<dbReference type="Gene3D" id="3.60.20.10">
    <property type="entry name" value="Glutamine Phosphoribosylpyrophosphate, subunit 1, domain 1"/>
    <property type="match status" value="1"/>
</dbReference>
<dbReference type="HAMAP" id="MF_00248">
    <property type="entry name" value="HslV"/>
    <property type="match status" value="1"/>
</dbReference>
<dbReference type="InterPro" id="IPR022281">
    <property type="entry name" value="ATP-dep_Prtase_HsIV_su"/>
</dbReference>
<dbReference type="InterPro" id="IPR029055">
    <property type="entry name" value="Ntn_hydrolases_N"/>
</dbReference>
<dbReference type="InterPro" id="IPR001353">
    <property type="entry name" value="Proteasome_sua/b"/>
</dbReference>
<dbReference type="InterPro" id="IPR023333">
    <property type="entry name" value="Proteasome_suB-type"/>
</dbReference>
<dbReference type="NCBIfam" id="TIGR03692">
    <property type="entry name" value="ATP_dep_HslV"/>
    <property type="match status" value="1"/>
</dbReference>
<dbReference type="NCBIfam" id="NF003964">
    <property type="entry name" value="PRK05456.1"/>
    <property type="match status" value="1"/>
</dbReference>
<dbReference type="PANTHER" id="PTHR32194:SF0">
    <property type="entry name" value="ATP-DEPENDENT PROTEASE SUBUNIT HSLV"/>
    <property type="match status" value="1"/>
</dbReference>
<dbReference type="PANTHER" id="PTHR32194">
    <property type="entry name" value="METALLOPROTEASE TLDD"/>
    <property type="match status" value="1"/>
</dbReference>
<dbReference type="Pfam" id="PF00227">
    <property type="entry name" value="Proteasome"/>
    <property type="match status" value="1"/>
</dbReference>
<dbReference type="PIRSF" id="PIRSF039093">
    <property type="entry name" value="HslV"/>
    <property type="match status" value="1"/>
</dbReference>
<dbReference type="SUPFAM" id="SSF56235">
    <property type="entry name" value="N-terminal nucleophile aminohydrolases (Ntn hydrolases)"/>
    <property type="match status" value="1"/>
</dbReference>
<dbReference type="PROSITE" id="PS51476">
    <property type="entry name" value="PROTEASOME_BETA_2"/>
    <property type="match status" value="1"/>
</dbReference>
<feature type="chain" id="PRO_0000336786" description="ATP-dependent protease subunit HslV">
    <location>
        <begin position="1"/>
        <end position="177"/>
    </location>
</feature>
<feature type="active site" evidence="1">
    <location>
        <position position="6"/>
    </location>
</feature>
<feature type="binding site" evidence="1">
    <location>
        <position position="161"/>
    </location>
    <ligand>
        <name>Na(+)</name>
        <dbReference type="ChEBI" id="CHEBI:29101"/>
    </ligand>
</feature>
<feature type="binding site" evidence="1">
    <location>
        <position position="164"/>
    </location>
    <ligand>
        <name>Na(+)</name>
        <dbReference type="ChEBI" id="CHEBI:29101"/>
    </ligand>
</feature>
<feature type="binding site" evidence="1">
    <location>
        <position position="167"/>
    </location>
    <ligand>
        <name>Na(+)</name>
        <dbReference type="ChEBI" id="CHEBI:29101"/>
    </ligand>
</feature>
<organism>
    <name type="scientific">Petrotoga mobilis (strain DSM 10674 / SJ95)</name>
    <dbReference type="NCBI Taxonomy" id="403833"/>
    <lineage>
        <taxon>Bacteria</taxon>
        <taxon>Thermotogati</taxon>
        <taxon>Thermotogota</taxon>
        <taxon>Thermotogae</taxon>
        <taxon>Petrotogales</taxon>
        <taxon>Petrotogaceae</taxon>
        <taxon>Petrotoga</taxon>
    </lineage>
</organism>
<protein>
    <recommendedName>
        <fullName evidence="1">ATP-dependent protease subunit HslV</fullName>
        <ecNumber evidence="1">3.4.25.2</ecNumber>
    </recommendedName>
</protein>